<keyword id="KW-0007">Acetylation</keyword>
<keyword id="KW-0963">Cytoplasm</keyword>
<keyword id="KW-0238">DNA-binding</keyword>
<keyword id="KW-1017">Isopeptide bond</keyword>
<keyword id="KW-0479">Metal-binding</keyword>
<keyword id="KW-0496">Mitochondrion</keyword>
<keyword id="KW-0539">Nucleus</keyword>
<keyword id="KW-0597">Phosphoprotein</keyword>
<keyword id="KW-0675">Receptor</keyword>
<keyword id="KW-1185">Reference proteome</keyword>
<keyword id="KW-0804">Transcription</keyword>
<keyword id="KW-0805">Transcription regulation</keyword>
<keyword id="KW-0832">Ubl conjugation</keyword>
<keyword id="KW-0862">Zinc</keyword>
<keyword id="KW-0863">Zinc-finger</keyword>
<accession>Q05343</accession>
<name>RXRA_RAT</name>
<protein>
    <recommendedName>
        <fullName>Retinoic acid receptor RXR-alpha</fullName>
    </recommendedName>
    <alternativeName>
        <fullName>Nuclear receptor subfamily 2 group B member 1</fullName>
    </alternativeName>
    <alternativeName>
        <fullName>Retinoid X receptor alpha</fullName>
    </alternativeName>
</protein>
<proteinExistence type="evidence at protein level"/>
<reference key="1">
    <citation type="journal article" date="1993" name="Proc. Natl. Acad. Sci. U.S.A.">
        <title>Interaction of the peroxisome-proliferator-activated receptor and retinoid X receptor.</title>
        <authorList>
            <person name="Gearing K.L."/>
            <person name="Gottlicher M."/>
            <person name="Teboul M."/>
            <person name="Widmark E."/>
            <person name="Gustafsson J.-A."/>
        </authorList>
    </citation>
    <scope>NUCLEOTIDE SEQUENCE [MRNA]</scope>
    <scope>FUNCTION</scope>
    <scope>HETERODIMERIZATION WITH PPARA</scope>
    <source>
        <tissue>Liver</tissue>
    </source>
</reference>
<reference key="2">
    <citation type="journal article" date="2012" name="Nat. Commun.">
        <title>Quantitative maps of protein phosphorylation sites across 14 different rat organs and tissues.</title>
        <authorList>
            <person name="Lundby A."/>
            <person name="Secher A."/>
            <person name="Lage K."/>
            <person name="Nordsborg N.B."/>
            <person name="Dmytriyev A."/>
            <person name="Lundby C."/>
            <person name="Olsen J.V."/>
        </authorList>
    </citation>
    <scope>IDENTIFICATION BY MASS SPECTROMETRY [LARGE SCALE ANALYSIS]</scope>
</reference>
<reference key="3">
    <citation type="journal article" date="2017" name="J. Steroid Biochem. Mol. Biol.">
        <title>Fundamental studies of adrenal retinoid-X-receptor: Protein isoform, tissue expression, subcellular distribution, and ligand availability.</title>
        <authorList>
            <person name="Cheng B."/>
            <person name="Al-Shammari F.H."/>
            <person name="Ghader I.A."/>
            <person name="Sequeira F."/>
            <person name="Thakkar J."/>
            <person name="Mathew T.C."/>
        </authorList>
    </citation>
    <scope>SUBCELLULAR LOCATION</scope>
    <scope>TISSUE SPECIFICITY</scope>
</reference>
<reference key="4">
    <citation type="journal article" date="2017" name="Proc. Natl. Acad. Sci. U.S.A.">
        <title>MicroRNA-10a is crucial for endothelial response to different flow patterns via interaction of retinoid acid receptors and histone deacetylases.</title>
        <authorList>
            <person name="Lee D.Y."/>
            <person name="Lin T.E."/>
            <person name="Lee C.I."/>
            <person name="Zhou J."/>
            <person name="Huang Y.H."/>
            <person name="Lee P.L."/>
            <person name="Shih Y.T."/>
            <person name="Chien S."/>
            <person name="Chiu J.J."/>
        </authorList>
    </citation>
    <scope>SUBCELLULAR LOCATION</scope>
    <scope>TISSUE SPECIFICITY</scope>
</reference>
<evidence type="ECO:0000250" key="1"/>
<evidence type="ECO:0000250" key="2">
    <source>
        <dbReference type="UniProtKB" id="P19793"/>
    </source>
</evidence>
<evidence type="ECO:0000250" key="3">
    <source>
        <dbReference type="UniProtKB" id="P28700"/>
    </source>
</evidence>
<evidence type="ECO:0000255" key="4">
    <source>
        <dbReference type="PROSITE-ProRule" id="PRU00407"/>
    </source>
</evidence>
<evidence type="ECO:0000255" key="5">
    <source>
        <dbReference type="PROSITE-ProRule" id="PRU01189"/>
    </source>
</evidence>
<evidence type="ECO:0000256" key="6">
    <source>
        <dbReference type="SAM" id="MobiDB-lite"/>
    </source>
</evidence>
<evidence type="ECO:0000269" key="7">
    <source>
    </source>
</evidence>
<evidence type="ECO:0000269" key="8">
    <source>
    </source>
</evidence>
<evidence type="ECO:0000269" key="9">
    <source>
    </source>
</evidence>
<evidence type="ECO:0000305" key="10"/>
<organism>
    <name type="scientific">Rattus norvegicus</name>
    <name type="common">Rat</name>
    <dbReference type="NCBI Taxonomy" id="10116"/>
    <lineage>
        <taxon>Eukaryota</taxon>
        <taxon>Metazoa</taxon>
        <taxon>Chordata</taxon>
        <taxon>Craniata</taxon>
        <taxon>Vertebrata</taxon>
        <taxon>Euteleostomi</taxon>
        <taxon>Mammalia</taxon>
        <taxon>Eutheria</taxon>
        <taxon>Euarchontoglires</taxon>
        <taxon>Glires</taxon>
        <taxon>Rodentia</taxon>
        <taxon>Myomorpha</taxon>
        <taxon>Muroidea</taxon>
        <taxon>Muridae</taxon>
        <taxon>Murinae</taxon>
        <taxon>Rattus</taxon>
    </lineage>
</organism>
<sequence length="467" mass="51266">MDTKHFLPLDFSTQVNSSSLSSPTGRGSMAAPSLHPSLGPGLGSPLGSPGQLHSPISTLSSPINGMGPPFSVISSPMGPHSMSVPTTPTLGFETGSPQLNSPMNPVSSSEDIKPPLGLNGVLKVPAHPSGNMSSFTKHICAICGDRSSGKHYGVYSCEGCKGFFKRTVRKDLTYTCRDNKDCLIDKRQRNRCQYCRYQKCLAMGMKREAVQEERQRGKDRNENEVESTSSANEDMPVEKILEAELAVEPKTETYVEANMGLNPSSPNDPVTNICQAADKQLFTLVEWAKRIPHFSELPLDDQVILLRAGWNELLIASFSHRSIAVKDGILLATGLHVHRNSAHSAGVGAIFDRVLTELVSKMRDMQMDKTELGCLRAIVLFNPDSKGLSNPAEVEALREKVYASLEAYCKHKYPEQPGRFAKLLLRLPALRSIGLKCLEHLFFFKLIGDTPIDTFLMEMLEAPHQTT</sequence>
<gene>
    <name type="primary">Rxra</name>
    <name type="synonym">Nr2b1</name>
</gene>
<comment type="function">
    <text evidence="2 9">Receptor for retinoic acid that acts as a transcription factor (By similarity). Forms homo- or heterodimers with retinoic acid receptors (RARs) and binds to target response elements in response to their ligands, all-trans or 9-cis retinoic acid, to regulate gene expression in various biological processes (By similarity). The RAR/RXR heterodimers bind to the retinoic acid response elements (RARE) composed of tandem 5'-AGGTCA-3' sites known as DR1-DR5 to regulate transcription (By similarity). The high affinity ligand for retinoid X receptors (RXRs) is 9-cis retinoic acid (By similarity). In the absence of ligand, the RXR-RAR heterodimers associate with a multiprotein complex containing transcription corepressors that induce histone deacetylation, chromatin condensation and transcriptional suppression (By similarity). On ligand binding, the corepressors dissociate from the receptors and coactivators are recruited leading to transcriptional activation (By similarity). Serves as a common heterodimeric partner for a number of nuclear receptors, such as RARA, RARB and PPARA (By similarity). The RXRA/RARB heterodimer can act as a transcriptional repressor or transcriptional activator, depending on the RARE DNA element context (By similarity). The RXRA/PPARA heterodimer is required for PPARA transcriptional activity on fatty acid oxidation genes such as ACOX1 and the P450 system genes (PubMed:8381967). Together with RARA, positively regulates microRNA-10a expression, thereby inhibiting the GATA6/VCAM1 signaling response to pulsatile shear stress in vascular endothelial cells (By similarity). Acts as an enhancer of RARA binding to RARE DNA element (By similarity). May facilitate the nuclear import of heterodimerization partners such as VDR and NR4A1 (By similarity). Promotes myelin debris phagocytosis and remyelination by macrophages (By similarity). Plays a role in the attenuation of the innate immune system in response to viral infections, possibly by negatively regulating the transcription of antiviral genes such as type I IFN genes (By similarity). Involved in the regulation of calcium signaling by repressing ITPR2 gene expression, thereby controlling cellular senescence (By similarity).</text>
</comment>
<comment type="subunit">
    <text evidence="2 3">Homodimer (By similarity). Heterodimer (via C-terminus) with RARA; required for ligand-dependent retinoic acid receptor transcriptional activity; association with RARA is enhanced by pulsatile shear stress (By similarity). Heterodimer with PPARA (via the leucine-like zipper in the LBD); the interaction is required for PPARA transcriptional activity (By similarity). Heterodimerizes with PPARG (By similarity). Heterodimerizes (via NR LBD) with RARB (By similarity). Heterodimerizes with NR1H4; the heterodimerization enhances the binding affinity for LXXLL motifs from coactivators (By similarity). Interacts with NCOA3 and NCOA6 coactivators (By similarity). Interacts with FAM120B (By similarity). Interacts with coactivator PELP1, SENP6, SFPQ, DNTTIP2 and RNF8 (By similarity). Interacts with PRMT2 (By similarity). Interacts with ASXL1 (By similarity). Interacts with BHLHE40/DEC1, BHLHE41/DEC2, MED1, NCOR1 and NCOR2 (By similarity). Interacts in a ligand-dependent fashion with MED1 and NCOA1 (By similarity). Interacts with VDR (By similarity). Interacts with EP300; the interaction is decreased by 9-cis retinoic acid (By similarity). Heterodimer (via C-terminus) with NR4A1 (DNA-binding domain); the interaction is enhanced by 9-cis retinoic acid (By similarity). NR4A1 competes with EP300 for interaction with RXRA and thereby attenuates EP300 mediated acetylation of RXRA (By similarity). In the absence of hormonal ligand, interacts with TACC1 (By similarity). Interacts ith IGFBP3 (By similarity).</text>
</comment>
<comment type="subcellular location">
    <subcellularLocation>
        <location evidence="4 7 8">Nucleus</location>
    </subcellularLocation>
    <subcellularLocation>
        <location evidence="2">Cytoplasm</location>
    </subcellularLocation>
    <subcellularLocation>
        <location evidence="2">Mitochondrion</location>
    </subcellularLocation>
    <text evidence="2">Localization to the nucleus is enhanced by vitamin D3 (By similarity). Nuclear localization may be enhanced by the interaction with heterodimerization partner VDR (By similarity). Translocation to the mitochondrion upon interaction with NR4A1 (By similarity). Increased nuclear localization upon pulsatile shear stress (By similarity).</text>
</comment>
<comment type="tissue specificity">
    <text evidence="7 8">Expressed in the adrenal gland with main expression in the zona fasciculata and medulla (at protein level) (PubMed:28267642). Expressed in aortic endothelial cells, with high expression in the descending thoracic aorta and the outer curvature of the aortic arch, where pulsatory shear stress exists, but very low in the inner curvature of the aortic arch, where oscillatory shear stress prevails (at protein level) (PubMed:28167758).</text>
</comment>
<comment type="domain">
    <text>Composed of three domains: a modulating N-terminal or AF1 domain, a DNA-binding domain and a C-terminal ligand-binding or AF2 domain.</text>
</comment>
<comment type="PTM">
    <text evidence="2 3">Phosphorylated on serine and threonine residues mainly in the N-terminal modulating domain (By similarity). Constitutively phosphorylated on Ser-22 in the presence or absence of ligand (By similarity). Under stress conditions, hyperphosphorylated by activated JNK on Ser-61, Ser-75, Thr-87 and Ser-265 (By similarity). Phosphorylated on Ser-28, in vitro, by PKA (By similarity). This phosphorylation is required for repression of cAMP-mediated transcriptional activity of RARA (By similarity).</text>
</comment>
<comment type="PTM">
    <text evidence="2">Ubiquitinated by UBR5, leading to its degradation: UBR5 specifically recognizes and binds ligand-bound RXRA when it is not associated with coactivators (NCOAs). In presence of NCOAs, the UBR5-degron is not accessible, preventing its ubiquitination and degradation.</text>
</comment>
<comment type="PTM">
    <text evidence="2">Sumoylation negatively regulates transcriptional activity. Desumoylated specifically by SENP6.</text>
</comment>
<comment type="PTM">
    <text evidence="2">Acetylated by EP300; acetylation enhances DNA binding and transcriptional activity.</text>
</comment>
<comment type="similarity">
    <text evidence="10">Belongs to the nuclear hormone receptor family. NR2 subfamily.</text>
</comment>
<dbReference type="EMBL" id="L06482">
    <property type="protein sequence ID" value="AAA42093.1"/>
    <property type="molecule type" value="mRNA"/>
</dbReference>
<dbReference type="PIR" id="A47278">
    <property type="entry name" value="A47278"/>
</dbReference>
<dbReference type="PIR" id="I67427">
    <property type="entry name" value="I67427"/>
</dbReference>
<dbReference type="BMRB" id="Q05343"/>
<dbReference type="SMR" id="Q05343"/>
<dbReference type="CORUM" id="Q05343"/>
<dbReference type="FunCoup" id="Q05343">
    <property type="interactions" value="1086"/>
</dbReference>
<dbReference type="STRING" id="10116.ENSRNOP00000012892"/>
<dbReference type="BindingDB" id="Q05343"/>
<dbReference type="ChEMBL" id="CHEMBL4431"/>
<dbReference type="DrugCentral" id="Q05343"/>
<dbReference type="iPTMnet" id="Q05343"/>
<dbReference type="PhosphoSitePlus" id="Q05343"/>
<dbReference type="PaxDb" id="10116-ENSRNOP00000012892"/>
<dbReference type="UCSC" id="RGD:3610">
    <property type="organism name" value="rat"/>
</dbReference>
<dbReference type="AGR" id="RGD:3610"/>
<dbReference type="RGD" id="3610">
    <property type="gene designation" value="Rxra"/>
</dbReference>
<dbReference type="eggNOG" id="KOG3575">
    <property type="taxonomic scope" value="Eukaryota"/>
</dbReference>
<dbReference type="InParanoid" id="Q05343"/>
<dbReference type="PhylomeDB" id="Q05343"/>
<dbReference type="Reactome" id="R-RNO-159418">
    <property type="pathway name" value="Recycling of bile acids and salts"/>
</dbReference>
<dbReference type="Reactome" id="R-RNO-192105">
    <property type="pathway name" value="Synthesis of bile acids and bile salts"/>
</dbReference>
<dbReference type="Reactome" id="R-RNO-193368">
    <property type="pathway name" value="Synthesis of bile acids and bile salts via 7alpha-hydroxycholesterol"/>
</dbReference>
<dbReference type="Reactome" id="R-RNO-193807">
    <property type="pathway name" value="Synthesis of bile acids and bile salts via 27-hydroxycholesterol"/>
</dbReference>
<dbReference type="Reactome" id="R-RNO-200425">
    <property type="pathway name" value="Carnitine shuttle"/>
</dbReference>
<dbReference type="Reactome" id="R-RNO-211976">
    <property type="pathway name" value="Endogenous sterols"/>
</dbReference>
<dbReference type="Reactome" id="R-RNO-381340">
    <property type="pathway name" value="Transcriptional regulation of white adipocyte differentiation"/>
</dbReference>
<dbReference type="Reactome" id="R-RNO-383280">
    <property type="pathway name" value="Nuclear Receptor transcription pathway"/>
</dbReference>
<dbReference type="Reactome" id="R-RNO-400206">
    <property type="pathway name" value="Regulation of lipid metabolism by PPARalpha"/>
</dbReference>
<dbReference type="Reactome" id="R-RNO-4090294">
    <property type="pathway name" value="SUMOylation of intracellular receptors"/>
</dbReference>
<dbReference type="Reactome" id="R-RNO-5362517">
    <property type="pathway name" value="Signaling by Retinoic Acid"/>
</dbReference>
<dbReference type="Reactome" id="R-RNO-9029569">
    <property type="pathway name" value="NR1H3 &amp; NR1H2 regulate gene expression linked to cholesterol transport and efflux"/>
</dbReference>
<dbReference type="Reactome" id="R-RNO-9616222">
    <property type="pathway name" value="Transcriptional regulation of granulopoiesis"/>
</dbReference>
<dbReference type="Reactome" id="R-RNO-9623433">
    <property type="pathway name" value="NR1H2 &amp; NR1H3 regulate gene expression to control bile acid homeostasis"/>
</dbReference>
<dbReference type="Reactome" id="R-RNO-9707564">
    <property type="pathway name" value="Cytoprotection by HMOX1"/>
</dbReference>
<dbReference type="Reactome" id="R-RNO-9841922">
    <property type="pathway name" value="MLL4 and MLL3 complexes regulate expression of PPARG target genes in adipogenesis and hepatic steatosis"/>
</dbReference>
<dbReference type="PRO" id="PR:Q05343"/>
<dbReference type="Proteomes" id="UP000002494">
    <property type="component" value="Unplaced"/>
</dbReference>
<dbReference type="GO" id="GO:0030424">
    <property type="term" value="C:axon"/>
    <property type="evidence" value="ECO:0000314"/>
    <property type="project" value="RGD"/>
</dbReference>
<dbReference type="GO" id="GO:0000785">
    <property type="term" value="C:chromatin"/>
    <property type="evidence" value="ECO:0000266"/>
    <property type="project" value="RGD"/>
</dbReference>
<dbReference type="GO" id="GO:0005739">
    <property type="term" value="C:mitochondrion"/>
    <property type="evidence" value="ECO:0007669"/>
    <property type="project" value="UniProtKB-SubCell"/>
</dbReference>
<dbReference type="GO" id="GO:0005634">
    <property type="term" value="C:nucleus"/>
    <property type="evidence" value="ECO:0000266"/>
    <property type="project" value="RGD"/>
</dbReference>
<dbReference type="GO" id="GO:0043235">
    <property type="term" value="C:receptor complex"/>
    <property type="evidence" value="ECO:0000266"/>
    <property type="project" value="RGD"/>
</dbReference>
<dbReference type="GO" id="GO:0090575">
    <property type="term" value="C:RNA polymerase II transcription regulator complex"/>
    <property type="evidence" value="ECO:0000266"/>
    <property type="project" value="RGD"/>
</dbReference>
<dbReference type="GO" id="GO:0005667">
    <property type="term" value="C:transcription regulator complex"/>
    <property type="evidence" value="ECO:0000266"/>
    <property type="project" value="RGD"/>
</dbReference>
<dbReference type="GO" id="GO:0031490">
    <property type="term" value="F:chromatin DNA binding"/>
    <property type="evidence" value="ECO:0000266"/>
    <property type="project" value="RGD"/>
</dbReference>
<dbReference type="GO" id="GO:0003677">
    <property type="term" value="F:DNA binding"/>
    <property type="evidence" value="ECO:0000266"/>
    <property type="project" value="RGD"/>
</dbReference>
<dbReference type="GO" id="GO:0050692">
    <property type="term" value="F:DNA binding domain binding"/>
    <property type="evidence" value="ECO:0000266"/>
    <property type="project" value="RGD"/>
</dbReference>
<dbReference type="GO" id="GO:0003700">
    <property type="term" value="F:DNA-binding transcription factor activity"/>
    <property type="evidence" value="ECO:0000266"/>
    <property type="project" value="RGD"/>
</dbReference>
<dbReference type="GO" id="GO:0003690">
    <property type="term" value="F:double-stranded DNA binding"/>
    <property type="evidence" value="ECO:0000266"/>
    <property type="project" value="RGD"/>
</dbReference>
<dbReference type="GO" id="GO:0019899">
    <property type="term" value="F:enzyme binding"/>
    <property type="evidence" value="ECO:0000266"/>
    <property type="project" value="RGD"/>
</dbReference>
<dbReference type="GO" id="GO:0042802">
    <property type="term" value="F:identical protein binding"/>
    <property type="evidence" value="ECO:0000266"/>
    <property type="project" value="RGD"/>
</dbReference>
<dbReference type="GO" id="GO:0050693">
    <property type="term" value="F:LBD domain binding"/>
    <property type="evidence" value="ECO:0000266"/>
    <property type="project" value="RGD"/>
</dbReference>
<dbReference type="GO" id="GO:0004879">
    <property type="term" value="F:nuclear receptor activity"/>
    <property type="evidence" value="ECO:0000266"/>
    <property type="project" value="RGD"/>
</dbReference>
<dbReference type="GO" id="GO:0042974">
    <property type="term" value="F:nuclear retinoic acid receptor binding"/>
    <property type="evidence" value="ECO:0000353"/>
    <property type="project" value="RGD"/>
</dbReference>
<dbReference type="GO" id="GO:0003707">
    <property type="term" value="F:nuclear steroid receptor activity"/>
    <property type="evidence" value="ECO:0000304"/>
    <property type="project" value="RGD"/>
</dbReference>
<dbReference type="GO" id="GO:0046966">
    <property type="term" value="F:nuclear thyroid hormone receptor binding"/>
    <property type="evidence" value="ECO:0000353"/>
    <property type="project" value="RGD"/>
</dbReference>
<dbReference type="GO" id="GO:0042809">
    <property type="term" value="F:nuclear vitamin D receptor binding"/>
    <property type="evidence" value="ECO:0000266"/>
    <property type="project" value="RGD"/>
</dbReference>
<dbReference type="GO" id="GO:0042277">
    <property type="term" value="F:peptide binding"/>
    <property type="evidence" value="ECO:0000266"/>
    <property type="project" value="RGD"/>
</dbReference>
<dbReference type="GO" id="GO:0019904">
    <property type="term" value="F:protein domain specific binding"/>
    <property type="evidence" value="ECO:0000353"/>
    <property type="project" value="RGD"/>
</dbReference>
<dbReference type="GO" id="GO:0044877">
    <property type="term" value="F:protein-containing complex binding"/>
    <property type="evidence" value="ECO:0000353"/>
    <property type="project" value="RGD"/>
</dbReference>
<dbReference type="GO" id="GO:0001972">
    <property type="term" value="F:retinoic acid binding"/>
    <property type="evidence" value="ECO:0000266"/>
    <property type="project" value="RGD"/>
</dbReference>
<dbReference type="GO" id="GO:0044323">
    <property type="term" value="F:retinoic acid-responsive element binding"/>
    <property type="evidence" value="ECO:0000266"/>
    <property type="project" value="RGD"/>
</dbReference>
<dbReference type="GO" id="GO:0000978">
    <property type="term" value="F:RNA polymerase II cis-regulatory region sequence-specific DNA binding"/>
    <property type="evidence" value="ECO:0000266"/>
    <property type="project" value="RGD"/>
</dbReference>
<dbReference type="GO" id="GO:0001162">
    <property type="term" value="F:RNA polymerase II intronic transcription regulatory region sequence-specific DNA binding"/>
    <property type="evidence" value="ECO:0000266"/>
    <property type="project" value="RGD"/>
</dbReference>
<dbReference type="GO" id="GO:0000977">
    <property type="term" value="F:RNA polymerase II transcription regulatory region sequence-specific DNA binding"/>
    <property type="evidence" value="ECO:0000266"/>
    <property type="project" value="RGD"/>
</dbReference>
<dbReference type="GO" id="GO:0043565">
    <property type="term" value="F:sequence-specific DNA binding"/>
    <property type="evidence" value="ECO:0000266"/>
    <property type="project" value="RGD"/>
</dbReference>
<dbReference type="GO" id="GO:1990837">
    <property type="term" value="F:sequence-specific double-stranded DNA binding"/>
    <property type="evidence" value="ECO:0000266"/>
    <property type="project" value="RGD"/>
</dbReference>
<dbReference type="GO" id="GO:0000976">
    <property type="term" value="F:transcription cis-regulatory region binding"/>
    <property type="evidence" value="ECO:0000266"/>
    <property type="project" value="RGD"/>
</dbReference>
<dbReference type="GO" id="GO:0001223">
    <property type="term" value="F:transcription coactivator binding"/>
    <property type="evidence" value="ECO:0000266"/>
    <property type="project" value="RGD"/>
</dbReference>
<dbReference type="GO" id="GO:0001221">
    <property type="term" value="F:transcription coregulator binding"/>
    <property type="evidence" value="ECO:0000266"/>
    <property type="project" value="RGD"/>
</dbReference>
<dbReference type="GO" id="GO:0008270">
    <property type="term" value="F:zinc ion binding"/>
    <property type="evidence" value="ECO:0000266"/>
    <property type="project" value="RGD"/>
</dbReference>
<dbReference type="GO" id="GO:0031103">
    <property type="term" value="P:axon regeneration"/>
    <property type="evidence" value="ECO:0000270"/>
    <property type="project" value="RGD"/>
</dbReference>
<dbReference type="GO" id="GO:0043010">
    <property type="term" value="P:camera-type eye development"/>
    <property type="evidence" value="ECO:0000266"/>
    <property type="project" value="RGD"/>
</dbReference>
<dbReference type="GO" id="GO:0060038">
    <property type="term" value="P:cardiac muscle cell proliferation"/>
    <property type="evidence" value="ECO:0000266"/>
    <property type="project" value="RGD"/>
</dbReference>
<dbReference type="GO" id="GO:0030154">
    <property type="term" value="P:cell differentiation"/>
    <property type="evidence" value="ECO:0000318"/>
    <property type="project" value="GO_Central"/>
</dbReference>
<dbReference type="GO" id="GO:0032869">
    <property type="term" value="P:cellular response to insulin stimulus"/>
    <property type="evidence" value="ECO:0000270"/>
    <property type="project" value="RGD"/>
</dbReference>
<dbReference type="GO" id="GO:0007566">
    <property type="term" value="P:embryo implantation"/>
    <property type="evidence" value="ECO:0000266"/>
    <property type="project" value="RGD"/>
</dbReference>
<dbReference type="GO" id="GO:0007565">
    <property type="term" value="P:female pregnancy"/>
    <property type="evidence" value="ECO:0000270"/>
    <property type="project" value="RGD"/>
</dbReference>
<dbReference type="GO" id="GO:0010467">
    <property type="term" value="P:gene expression"/>
    <property type="evidence" value="ECO:0000266"/>
    <property type="project" value="RGD"/>
</dbReference>
<dbReference type="GO" id="GO:0007507">
    <property type="term" value="P:heart development"/>
    <property type="evidence" value="ECO:0000266"/>
    <property type="project" value="RGD"/>
</dbReference>
<dbReference type="GO" id="GO:0009755">
    <property type="term" value="P:hormone-mediated signaling pathway"/>
    <property type="evidence" value="ECO:0000266"/>
    <property type="project" value="RGD"/>
</dbReference>
<dbReference type="GO" id="GO:0001701">
    <property type="term" value="P:in utero embryonic development"/>
    <property type="evidence" value="ECO:0000266"/>
    <property type="project" value="RGD"/>
</dbReference>
<dbReference type="GO" id="GO:0001889">
    <property type="term" value="P:liver development"/>
    <property type="evidence" value="ECO:0000270"/>
    <property type="project" value="RGD"/>
</dbReference>
<dbReference type="GO" id="GO:0001893">
    <property type="term" value="P:maternal placenta development"/>
    <property type="evidence" value="ECO:0000266"/>
    <property type="project" value="RGD"/>
</dbReference>
<dbReference type="GO" id="GO:0007494">
    <property type="term" value="P:midgut development"/>
    <property type="evidence" value="ECO:0000270"/>
    <property type="project" value="RGD"/>
</dbReference>
<dbReference type="GO" id="GO:0042789">
    <property type="term" value="P:mRNA transcription by RNA polymerase II"/>
    <property type="evidence" value="ECO:0000266"/>
    <property type="project" value="RGD"/>
</dbReference>
<dbReference type="GO" id="GO:0008285">
    <property type="term" value="P:negative regulation of cell population proliferation"/>
    <property type="evidence" value="ECO:0000315"/>
    <property type="project" value="RGD"/>
</dbReference>
<dbReference type="GO" id="GO:0000122">
    <property type="term" value="P:negative regulation of transcription by RNA polymerase II"/>
    <property type="evidence" value="ECO:0000266"/>
    <property type="project" value="RGD"/>
</dbReference>
<dbReference type="GO" id="GO:0007399">
    <property type="term" value="P:nervous system development"/>
    <property type="evidence" value="ECO:0000318"/>
    <property type="project" value="GO_Central"/>
</dbReference>
<dbReference type="GO" id="GO:0035357">
    <property type="term" value="P:peroxisome proliferator activated receptor signaling pathway"/>
    <property type="evidence" value="ECO:0000266"/>
    <property type="project" value="RGD"/>
</dbReference>
<dbReference type="GO" id="GO:0001890">
    <property type="term" value="P:placenta development"/>
    <property type="evidence" value="ECO:0000270"/>
    <property type="project" value="RGD"/>
</dbReference>
<dbReference type="GO" id="GO:0043065">
    <property type="term" value="P:positive regulation of apoptotic process"/>
    <property type="evidence" value="ECO:0000315"/>
    <property type="project" value="RGD"/>
</dbReference>
<dbReference type="GO" id="GO:0045893">
    <property type="term" value="P:positive regulation of DNA-templated transcription"/>
    <property type="evidence" value="ECO:0000266"/>
    <property type="project" value="RGD"/>
</dbReference>
<dbReference type="GO" id="GO:0002157">
    <property type="term" value="P:positive regulation of thyroid hormone receptor signaling pathway"/>
    <property type="evidence" value="ECO:0000266"/>
    <property type="project" value="RGD"/>
</dbReference>
<dbReference type="GO" id="GO:0045944">
    <property type="term" value="P:positive regulation of transcription by RNA polymerase II"/>
    <property type="evidence" value="ECO:0000266"/>
    <property type="project" value="RGD"/>
</dbReference>
<dbReference type="GO" id="GO:0045994">
    <property type="term" value="P:positive regulation of translational initiation by iron"/>
    <property type="evidence" value="ECO:0000266"/>
    <property type="project" value="RGD"/>
</dbReference>
<dbReference type="GO" id="GO:0070564">
    <property type="term" value="P:positive regulation of vitamin D receptor signaling pathway"/>
    <property type="evidence" value="ECO:0000266"/>
    <property type="project" value="RGD"/>
</dbReference>
<dbReference type="GO" id="GO:0060687">
    <property type="term" value="P:regulation of branching involved in prostate gland morphogenesis"/>
    <property type="evidence" value="ECO:0000266"/>
    <property type="project" value="RGD"/>
</dbReference>
<dbReference type="GO" id="GO:0006355">
    <property type="term" value="P:regulation of DNA-templated transcription"/>
    <property type="evidence" value="ECO:0000314"/>
    <property type="project" value="RGD"/>
</dbReference>
<dbReference type="GO" id="GO:0031641">
    <property type="term" value="P:regulation of myelination"/>
    <property type="evidence" value="ECO:0000314"/>
    <property type="project" value="RGD"/>
</dbReference>
<dbReference type="GO" id="GO:0006357">
    <property type="term" value="P:regulation of transcription by RNA polymerase II"/>
    <property type="evidence" value="ECO:0000266"/>
    <property type="project" value="RGD"/>
</dbReference>
<dbReference type="GO" id="GO:0045471">
    <property type="term" value="P:response to ethanol"/>
    <property type="evidence" value="ECO:0000270"/>
    <property type="project" value="RGD"/>
</dbReference>
<dbReference type="GO" id="GO:0051384">
    <property type="term" value="P:response to glucocorticoid"/>
    <property type="evidence" value="ECO:0000315"/>
    <property type="project" value="RGD"/>
</dbReference>
<dbReference type="GO" id="GO:0007584">
    <property type="term" value="P:response to nutrient"/>
    <property type="evidence" value="ECO:0000270"/>
    <property type="project" value="RGD"/>
</dbReference>
<dbReference type="GO" id="GO:0032526">
    <property type="term" value="P:response to retinoic acid"/>
    <property type="evidence" value="ECO:0000270"/>
    <property type="project" value="RGD"/>
</dbReference>
<dbReference type="GO" id="GO:0010269">
    <property type="term" value="P:response to selenium ion"/>
    <property type="evidence" value="ECO:0000270"/>
    <property type="project" value="RGD"/>
</dbReference>
<dbReference type="GO" id="GO:0033189">
    <property type="term" value="P:response to vitamin A"/>
    <property type="evidence" value="ECO:0000270"/>
    <property type="project" value="RGD"/>
</dbReference>
<dbReference type="GO" id="GO:0033280">
    <property type="term" value="P:response to vitamin D"/>
    <property type="evidence" value="ECO:0000270"/>
    <property type="project" value="RGD"/>
</dbReference>
<dbReference type="GO" id="GO:0048384">
    <property type="term" value="P:retinoic acid receptor signaling pathway"/>
    <property type="evidence" value="ECO:0000266"/>
    <property type="project" value="RGD"/>
</dbReference>
<dbReference type="GO" id="GO:0060528">
    <property type="term" value="P:secretory columnal luminar epithelial cell differentiation involved in prostate glandular acinus development"/>
    <property type="evidence" value="ECO:0000266"/>
    <property type="project" value="RGD"/>
</dbReference>
<dbReference type="GO" id="GO:0055012">
    <property type="term" value="P:ventricular cardiac muscle cell differentiation"/>
    <property type="evidence" value="ECO:0000266"/>
    <property type="project" value="RGD"/>
</dbReference>
<dbReference type="GO" id="GO:0055010">
    <property type="term" value="P:ventricular cardiac muscle tissue morphogenesis"/>
    <property type="evidence" value="ECO:0000266"/>
    <property type="project" value="RGD"/>
</dbReference>
<dbReference type="CDD" id="cd06956">
    <property type="entry name" value="NR_DBD_RXR"/>
    <property type="match status" value="1"/>
</dbReference>
<dbReference type="CDD" id="cd06943">
    <property type="entry name" value="NR_LBD_RXR_like"/>
    <property type="match status" value="1"/>
</dbReference>
<dbReference type="FunFam" id="1.10.565.10:FF:000002">
    <property type="entry name" value="Retinoic acid receptor RXR-alpha"/>
    <property type="match status" value="1"/>
</dbReference>
<dbReference type="FunFam" id="3.30.50.10:FF:000005">
    <property type="entry name" value="Retinoic acid receptor RXR-alpha"/>
    <property type="match status" value="1"/>
</dbReference>
<dbReference type="Gene3D" id="3.30.50.10">
    <property type="entry name" value="Erythroid Transcription Factor GATA-1, subunit A"/>
    <property type="match status" value="1"/>
</dbReference>
<dbReference type="Gene3D" id="1.10.565.10">
    <property type="entry name" value="Retinoid X Receptor"/>
    <property type="match status" value="1"/>
</dbReference>
<dbReference type="InterPro" id="IPR035500">
    <property type="entry name" value="NHR-like_dom_sf"/>
</dbReference>
<dbReference type="InterPro" id="IPR021780">
    <property type="entry name" value="Nuc_recep-AF1"/>
</dbReference>
<dbReference type="InterPro" id="IPR000536">
    <property type="entry name" value="Nucl_hrmn_rcpt_lig-bd"/>
</dbReference>
<dbReference type="InterPro" id="IPR050274">
    <property type="entry name" value="Nuclear_hormone_rcpt_NR2"/>
</dbReference>
<dbReference type="InterPro" id="IPR001723">
    <property type="entry name" value="Nuclear_hrmn_rcpt"/>
</dbReference>
<dbReference type="InterPro" id="IPR000003">
    <property type="entry name" value="Retinoid-X_rcpt/HNF4"/>
</dbReference>
<dbReference type="InterPro" id="IPR001628">
    <property type="entry name" value="Znf_hrmn_rcpt"/>
</dbReference>
<dbReference type="InterPro" id="IPR013088">
    <property type="entry name" value="Znf_NHR/GATA"/>
</dbReference>
<dbReference type="PANTHER" id="PTHR24083">
    <property type="entry name" value="NUCLEAR HORMONE RECEPTOR"/>
    <property type="match status" value="1"/>
</dbReference>
<dbReference type="Pfam" id="PF00104">
    <property type="entry name" value="Hormone_recep"/>
    <property type="match status" value="1"/>
</dbReference>
<dbReference type="Pfam" id="PF11825">
    <property type="entry name" value="Nuc_recep-AF1"/>
    <property type="match status" value="1"/>
</dbReference>
<dbReference type="Pfam" id="PF00105">
    <property type="entry name" value="zf-C4"/>
    <property type="match status" value="1"/>
</dbReference>
<dbReference type="PRINTS" id="PR00545">
    <property type="entry name" value="RETINOIDXR"/>
</dbReference>
<dbReference type="PRINTS" id="PR00398">
    <property type="entry name" value="STRDHORMONER"/>
</dbReference>
<dbReference type="PRINTS" id="PR00047">
    <property type="entry name" value="STROIDFINGER"/>
</dbReference>
<dbReference type="SMART" id="SM00430">
    <property type="entry name" value="HOLI"/>
    <property type="match status" value="1"/>
</dbReference>
<dbReference type="SMART" id="SM00399">
    <property type="entry name" value="ZnF_C4"/>
    <property type="match status" value="1"/>
</dbReference>
<dbReference type="SUPFAM" id="SSF57716">
    <property type="entry name" value="Glucocorticoid receptor-like (DNA-binding domain)"/>
    <property type="match status" value="1"/>
</dbReference>
<dbReference type="SUPFAM" id="SSF48508">
    <property type="entry name" value="Nuclear receptor ligand-binding domain"/>
    <property type="match status" value="1"/>
</dbReference>
<dbReference type="PROSITE" id="PS51843">
    <property type="entry name" value="NR_LBD"/>
    <property type="match status" value="1"/>
</dbReference>
<dbReference type="PROSITE" id="PS00031">
    <property type="entry name" value="NUCLEAR_REC_DBD_1"/>
    <property type="match status" value="1"/>
</dbReference>
<dbReference type="PROSITE" id="PS51030">
    <property type="entry name" value="NUCLEAR_REC_DBD_2"/>
    <property type="match status" value="1"/>
</dbReference>
<feature type="chain" id="PRO_0000053568" description="Retinoic acid receptor RXR-alpha">
    <location>
        <begin position="1"/>
        <end position="467"/>
    </location>
</feature>
<feature type="domain" description="NR LBD" evidence="5">
    <location>
        <begin position="232"/>
        <end position="463"/>
    </location>
</feature>
<feature type="DNA-binding region" description="Nuclear receptor" evidence="4">
    <location>
        <begin position="140"/>
        <end position="205"/>
    </location>
</feature>
<feature type="zinc finger region" description="NR C4-type" evidence="4">
    <location>
        <begin position="140"/>
        <end position="160"/>
    </location>
</feature>
<feature type="zinc finger region" description="NR C4-type" evidence="4">
    <location>
        <begin position="176"/>
        <end position="200"/>
    </location>
</feature>
<feature type="region of interest" description="Modulating" evidence="1">
    <location>
        <begin position="1"/>
        <end position="139"/>
    </location>
</feature>
<feature type="region of interest" description="Disordered" evidence="6">
    <location>
        <begin position="1"/>
        <end position="61"/>
    </location>
</feature>
<feature type="region of interest" description="Disordered" evidence="6">
    <location>
        <begin position="79"/>
        <end position="109"/>
    </location>
</feature>
<feature type="region of interest" description="Nuclear localization signal" evidence="2">
    <location>
        <begin position="165"/>
        <end position="170"/>
    </location>
</feature>
<feature type="region of interest" description="Hinge" evidence="1">
    <location>
        <begin position="206"/>
        <end position="229"/>
    </location>
</feature>
<feature type="region of interest" description="Disordered" evidence="6">
    <location>
        <begin position="211"/>
        <end position="233"/>
    </location>
</feature>
<feature type="region of interest" description="Required for nuclear export" evidence="2">
    <location>
        <begin position="353"/>
        <end position="373"/>
    </location>
</feature>
<feature type="compositionally biased region" description="Low complexity" evidence="6">
    <location>
        <begin position="32"/>
        <end position="55"/>
    </location>
</feature>
<feature type="compositionally biased region" description="Polar residues" evidence="6">
    <location>
        <begin position="83"/>
        <end position="109"/>
    </location>
</feature>
<feature type="compositionally biased region" description="Basic and acidic residues" evidence="6">
    <location>
        <begin position="211"/>
        <end position="223"/>
    </location>
</feature>
<feature type="binding site" evidence="2">
    <location>
        <position position="140"/>
    </location>
    <ligand>
        <name>Zn(2+)</name>
        <dbReference type="ChEBI" id="CHEBI:29105"/>
        <label>1</label>
    </ligand>
</feature>
<feature type="binding site" evidence="2">
    <location>
        <position position="143"/>
    </location>
    <ligand>
        <name>Zn(2+)</name>
        <dbReference type="ChEBI" id="CHEBI:29105"/>
        <label>1</label>
    </ligand>
</feature>
<feature type="binding site" evidence="2">
    <location>
        <position position="157"/>
    </location>
    <ligand>
        <name>Zn(2+)</name>
        <dbReference type="ChEBI" id="CHEBI:29105"/>
        <label>1</label>
    </ligand>
</feature>
<feature type="binding site" evidence="2">
    <location>
        <position position="160"/>
    </location>
    <ligand>
        <name>Zn(2+)</name>
        <dbReference type="ChEBI" id="CHEBI:29105"/>
        <label>1</label>
    </ligand>
</feature>
<feature type="binding site" evidence="2">
    <location>
        <position position="176"/>
    </location>
    <ligand>
        <name>Zn(2+)</name>
        <dbReference type="ChEBI" id="CHEBI:29105"/>
        <label>2</label>
    </ligand>
</feature>
<feature type="binding site" evidence="2">
    <location>
        <position position="182"/>
    </location>
    <ligand>
        <name>Zn(2+)</name>
        <dbReference type="ChEBI" id="CHEBI:29105"/>
        <label>2</label>
    </ligand>
</feature>
<feature type="binding site" evidence="2">
    <location>
        <position position="192"/>
    </location>
    <ligand>
        <name>Zn(2+)</name>
        <dbReference type="ChEBI" id="CHEBI:29105"/>
        <label>2</label>
    </ligand>
</feature>
<feature type="binding site" evidence="2">
    <location>
        <position position="195"/>
    </location>
    <ligand>
        <name>Zn(2+)</name>
        <dbReference type="ChEBI" id="CHEBI:29105"/>
        <label>2</label>
    </ligand>
</feature>
<feature type="binding site" evidence="2">
    <location>
        <position position="321"/>
    </location>
    <ligand>
        <name>9-cis-retinoate</name>
        <dbReference type="ChEBI" id="CHEBI:78630"/>
    </ligand>
</feature>
<feature type="binding site" evidence="2">
    <location>
        <position position="321"/>
    </location>
    <ligand>
        <name>all-trans-retinoate</name>
        <dbReference type="ChEBI" id="CHEBI:35291"/>
    </ligand>
</feature>
<feature type="binding site" evidence="2">
    <location>
        <position position="332"/>
    </location>
    <ligand>
        <name>9-cis-retinoate</name>
        <dbReference type="ChEBI" id="CHEBI:78630"/>
    </ligand>
</feature>
<feature type="binding site" evidence="2">
    <location>
        <position position="332"/>
    </location>
    <ligand>
        <name>all-trans-retinoate</name>
        <dbReference type="ChEBI" id="CHEBI:35291"/>
    </ligand>
</feature>
<feature type="modified residue" description="Phosphoserine" evidence="3">
    <location>
        <position position="22"/>
    </location>
</feature>
<feature type="modified residue" description="Phosphoserine" evidence="2">
    <location>
        <position position="28"/>
    </location>
</feature>
<feature type="modified residue" description="Phosphoserine; by MAPK8 and MAPK9" evidence="3">
    <location>
        <position position="61"/>
    </location>
</feature>
<feature type="modified residue" description="Phosphoserine; by MAPK8 and MAPK9" evidence="3">
    <location>
        <position position="75"/>
    </location>
</feature>
<feature type="modified residue" description="Phosphothreonine; by MAPK8 and MAPK9" evidence="3">
    <location>
        <position position="87"/>
    </location>
</feature>
<feature type="modified residue" description="Phosphoserine" evidence="2">
    <location>
        <position position="134"/>
    </location>
</feature>
<feature type="modified residue" description="N6-acetyllysine" evidence="2">
    <location>
        <position position="150"/>
    </location>
</feature>
<feature type="modified residue" description="Phosphoserine" evidence="2">
    <location>
        <position position="264"/>
    </location>
</feature>
<feature type="modified residue" description="Phosphoserine; by MAPK8 and MAPK9" evidence="3">
    <location>
        <position position="265"/>
    </location>
</feature>
<feature type="cross-link" description="Glycyl lysine isopeptide (Lys-Gly) (interchain with G-Cter in SUMO2)" evidence="2">
    <location>
        <position position="4"/>
    </location>
</feature>
<feature type="cross-link" description="Glycyl lysine isopeptide (Lys-Gly) (interchain with G-Cter in SUMO)" evidence="1">
    <location>
        <position position="113"/>
    </location>
</feature>